<comment type="function">
    <text evidence="2">Catalyzes the phosphorylation of D-fructose 6-phosphate to fructose 1,6-bisphosphate by ATP, the first committing step of glycolysis.</text>
</comment>
<comment type="catalytic activity">
    <reaction evidence="2">
        <text>beta-D-fructose 6-phosphate + ATP = beta-D-fructose 1,6-bisphosphate + ADP + H(+)</text>
        <dbReference type="Rhea" id="RHEA:16109"/>
        <dbReference type="ChEBI" id="CHEBI:15378"/>
        <dbReference type="ChEBI" id="CHEBI:30616"/>
        <dbReference type="ChEBI" id="CHEBI:32966"/>
        <dbReference type="ChEBI" id="CHEBI:57634"/>
        <dbReference type="ChEBI" id="CHEBI:456216"/>
        <dbReference type="EC" id="2.7.1.11"/>
    </reaction>
</comment>
<comment type="cofactor">
    <cofactor evidence="2">
        <name>Mg(2+)</name>
        <dbReference type="ChEBI" id="CHEBI:18420"/>
    </cofactor>
</comment>
<comment type="activity regulation">
    <text evidence="2">Allosterically activated by ADP, AMP, or fructose 2,6-bisphosphate, and allosterically inhibited by ATP or citrate.</text>
</comment>
<comment type="pathway">
    <text evidence="2">Carbohydrate degradation; glycolysis; D-glyceraldehyde 3-phosphate and glycerone phosphate from D-glucose: step 3/4.</text>
</comment>
<comment type="subunit">
    <text evidence="1">Heterododecamer of 4 alpha, 4 beta and 4 gamma chains. The gamma chain bridges the N-terminal halves of the alpha and beta subunits (By similarity).</text>
</comment>
<comment type="subcellular location">
    <subcellularLocation>
        <location evidence="2">Cytoplasm</location>
    </subcellularLocation>
</comment>
<comment type="similarity">
    <text evidence="2">Belongs to the phosphofructokinase type A (PFKA) family. ATP-dependent PFK group I subfamily. Eukaryotic two domain clade 'E' sub-subfamily.</text>
</comment>
<comment type="sequence caution" evidence="3">
    <conflict type="frameshift">
        <sequence resource="EMBL-CDS" id="CAY67878"/>
    </conflict>
</comment>
<feature type="initiator methionine" description="Removed" evidence="1">
    <location>
        <position position="1"/>
    </location>
</feature>
<feature type="chain" id="PRO_0000429717" description="ATP-dependent 6-phosphofructokinase subunit beta">
    <location>
        <begin position="2"/>
        <end position="941"/>
    </location>
</feature>
<feature type="region of interest" description="N-terminal catalytic PFK domain 1" evidence="2">
    <location>
        <begin position="2"/>
        <end position="558"/>
    </location>
</feature>
<feature type="region of interest" description="Interdomain linker" evidence="2">
    <location>
        <begin position="559"/>
        <end position="572"/>
    </location>
</feature>
<feature type="region of interest" description="C-terminal regulatory PFK domain 2" evidence="2">
    <location>
        <begin position="573"/>
        <end position="941"/>
    </location>
</feature>
<feature type="active site" description="Proton acceptor" evidence="2">
    <location>
        <position position="333"/>
    </location>
</feature>
<feature type="binding site" evidence="2">
    <location>
        <position position="191"/>
    </location>
    <ligand>
        <name>ATP</name>
        <dbReference type="ChEBI" id="CHEBI:30616"/>
    </ligand>
</feature>
<feature type="binding site" evidence="2">
    <location>
        <begin position="255"/>
        <end position="256"/>
    </location>
    <ligand>
        <name>ATP</name>
        <dbReference type="ChEBI" id="CHEBI:30616"/>
    </ligand>
</feature>
<feature type="binding site" evidence="2">
    <location>
        <begin position="285"/>
        <end position="288"/>
    </location>
    <ligand>
        <name>ATP</name>
        <dbReference type="ChEBI" id="CHEBI:30616"/>
    </ligand>
</feature>
<feature type="binding site" evidence="2">
    <location>
        <position position="286"/>
    </location>
    <ligand>
        <name>Mg(2+)</name>
        <dbReference type="ChEBI" id="CHEBI:18420"/>
        <note>catalytic</note>
    </ligand>
</feature>
<feature type="binding site" evidence="2">
    <location>
        <begin position="331"/>
        <end position="333"/>
    </location>
    <ligand>
        <name>beta-D-fructose 6-phosphate</name>
        <dbReference type="ChEBI" id="CHEBI:57634"/>
        <label>2</label>
        <note>ligand shared with subunit alpha</note>
    </ligand>
</feature>
<feature type="binding site" evidence="2">
    <location>
        <position position="368"/>
    </location>
    <ligand>
        <name>beta-D-fructose 6-phosphate</name>
        <dbReference type="ChEBI" id="CHEBI:57634"/>
        <label>1</label>
        <note>ligand shared with subunit alpha</note>
    </ligand>
</feature>
<feature type="binding site" evidence="2">
    <location>
        <begin position="375"/>
        <end position="377"/>
    </location>
    <ligand>
        <name>beta-D-fructose 6-phosphate</name>
        <dbReference type="ChEBI" id="CHEBI:57634"/>
        <label>2</label>
        <note>ligand shared with subunit alpha</note>
    </ligand>
</feature>
<feature type="binding site" evidence="2">
    <location>
        <position position="432"/>
    </location>
    <ligand>
        <name>beta-D-fructose 6-phosphate</name>
        <dbReference type="ChEBI" id="CHEBI:57634"/>
        <label>2</label>
        <note>ligand shared with subunit alpha</note>
    </ligand>
</feature>
<feature type="binding site" evidence="2">
    <location>
        <position position="460"/>
    </location>
    <ligand>
        <name>beta-D-fructose 6-phosphate</name>
        <dbReference type="ChEBI" id="CHEBI:57634"/>
        <label>1</label>
        <note>ligand shared with subunit alpha</note>
    </ligand>
</feature>
<feature type="binding site" evidence="2">
    <location>
        <begin position="466"/>
        <end position="469"/>
    </location>
    <ligand>
        <name>beta-D-fructose 6-phosphate</name>
        <dbReference type="ChEBI" id="CHEBI:57634"/>
        <label>2</label>
        <note>ligand shared with subunit alpha</note>
    </ligand>
</feature>
<feature type="binding site" evidence="2">
    <location>
        <position position="643"/>
    </location>
    <ligand>
        <name>beta-D-fructose 2,6-bisphosphate</name>
        <dbReference type="ChEBI" id="CHEBI:58579"/>
        <label>2</label>
        <note>allosteric activator; ligand shared with subunit alpha</note>
    </ligand>
</feature>
<feature type="binding site" evidence="2">
    <location>
        <begin position="701"/>
        <end position="705"/>
    </location>
    <ligand>
        <name>beta-D-fructose 2,6-bisphosphate</name>
        <dbReference type="ChEBI" id="CHEBI:58579"/>
        <label>2</label>
        <note>allosteric activator; ligand shared with subunit alpha</note>
    </ligand>
</feature>
<feature type="binding site" evidence="2">
    <location>
        <position position="739"/>
    </location>
    <ligand>
        <name>beta-D-fructose 2,6-bisphosphate</name>
        <dbReference type="ChEBI" id="CHEBI:58579"/>
        <label>1</label>
        <note>allosteric activator; ligand shared with subunit alpha</note>
    </ligand>
</feature>
<feature type="binding site" evidence="2">
    <location>
        <begin position="746"/>
        <end position="748"/>
    </location>
    <ligand>
        <name>beta-D-fructose 2,6-bisphosphate</name>
        <dbReference type="ChEBI" id="CHEBI:58579"/>
        <label>2</label>
        <note>allosteric activator; ligand shared with subunit alpha</note>
    </ligand>
</feature>
<feature type="binding site" evidence="2">
    <location>
        <position position="806"/>
    </location>
    <ligand>
        <name>beta-D-fructose 2,6-bisphosphate</name>
        <dbReference type="ChEBI" id="CHEBI:58579"/>
        <label>2</label>
        <note>allosteric activator; ligand shared with subunit alpha</note>
    </ligand>
</feature>
<feature type="binding site" evidence="2">
    <location>
        <position position="832"/>
    </location>
    <ligand>
        <name>beta-D-fructose 2,6-bisphosphate</name>
        <dbReference type="ChEBI" id="CHEBI:58579"/>
        <label>1</label>
        <note>allosteric activator; ligand shared with subunit alpha</note>
    </ligand>
</feature>
<feature type="binding site" evidence="2">
    <location>
        <begin position="838"/>
        <end position="841"/>
    </location>
    <ligand>
        <name>beta-D-fructose 2,6-bisphosphate</name>
        <dbReference type="ChEBI" id="CHEBI:58579"/>
        <label>2</label>
        <note>allosteric activator; ligand shared with subunit alpha</note>
    </ligand>
</feature>
<feature type="binding site" evidence="2">
    <location>
        <position position="918"/>
    </location>
    <ligand>
        <name>beta-D-fructose 2,6-bisphosphate</name>
        <dbReference type="ChEBI" id="CHEBI:58579"/>
        <label>2</label>
        <note>allosteric activator; ligand shared with subunit alpha</note>
    </ligand>
</feature>
<evidence type="ECO:0000250" key="1"/>
<evidence type="ECO:0000255" key="2">
    <source>
        <dbReference type="HAMAP-Rule" id="MF_03184"/>
    </source>
</evidence>
<evidence type="ECO:0000305" key="3"/>
<accession>C4QXA5</accession>
<organism>
    <name type="scientific">Komagataella phaffii (strain GS115 / ATCC 20864)</name>
    <name type="common">Yeast</name>
    <name type="synonym">Pichia pastoris</name>
    <dbReference type="NCBI Taxonomy" id="644223"/>
    <lineage>
        <taxon>Eukaryota</taxon>
        <taxon>Fungi</taxon>
        <taxon>Dikarya</taxon>
        <taxon>Ascomycota</taxon>
        <taxon>Saccharomycotina</taxon>
        <taxon>Pichiomycetes</taxon>
        <taxon>Pichiales</taxon>
        <taxon>Pichiaceae</taxon>
        <taxon>Komagataella</taxon>
    </lineage>
</organism>
<sequence length="941" mass="103753">MPDASLFNGTSFITLFAPNISLFQASIDFYTDRLGFAIKETSNQKLVWLQLEEDSNNVSIQLLLDPEHAASVSQIDQNIRNLTRSLYRKDWRSIQSNIAFKSSSLSKLVKLLKDGGHPVQQSPNEISPFEVYTLDPLGSLIGFSGFKNPFAVNERSLLPKVSEEKAYRTEDDSEKLFTPIRKTIGVMTSGGDSPGMNPFVRAVVRAGIYKGCKVFCIHEGYEGLVRGGEKYIKETQWHDVRGWLVEGGTNIGTARCKEFRERSGRLKACKNMIDMGIDALIVCGGDGSLTGADRFRSEWPSLIEELLQTERISQQQFETYQNLNICGAVGSIDNDMSSTDATIGAFSSLDRICRAIDYIDATANSHSRAFIVEVMGRHCGWLGLLAGLATSADYILIPEKPASSREWQDQMCDIVSKHRARGKRKTIVIVAEGAISNDLSPISCDQVKDVLVNRLGLDTRVTTLGHVQRGGTAVAFDRIYATLQGVEAVNAVLECNADTPSPMIAIKEDQITRVPLVDAVELTQQVAKSIESRNFKRAISLRDSEFVEHMKNFISTNSADHVPPSLPLEKRKKVAIINVGAPAGGMNSAVYSMATYCMSRGHVPYAIHNGFSGLARHESVRSINWLDIEGWGSLGGSEIGTNRTLPNDADIGMIAYFFEKYGFDGLILVGGFEAFISLHQLERARINYPSLRIPLVLIPATISNNVPGTEYSLGSDTCLNSFMEYCDVIKQSAAATRNRVFVVEVQGGNSGYIATHAQLACGAQISYVPEEGISLAQLEMDINSLKESFANDQGKTKSGRLILKSENASKVLTTEVISTIIDDEASGRFDSKTAIPGHVQQGGIPSPMDRVRASRFAIRAVSFIEKHSDKCQAFKNSISFRQTDEITSTAVVLGIHKSQLRFTPIRQLYDFESDVPRRMRKNIFWSNVREISDMLSGRTSL</sequence>
<gene>
    <name type="primary">PFK2</name>
    <name type="ordered locus">PAS_chr1-4_0047</name>
</gene>
<reference key="1">
    <citation type="journal article" date="2009" name="Nat. Biotechnol.">
        <title>Genome sequence of the recombinant protein production host Pichia pastoris.</title>
        <authorList>
            <person name="De Schutter K."/>
            <person name="Lin Y.-C."/>
            <person name="Tiels P."/>
            <person name="Van Hecke A."/>
            <person name="Glinka S."/>
            <person name="Weber-Lehmann J."/>
            <person name="Rouze P."/>
            <person name="Van de Peer Y."/>
            <person name="Callewaert N."/>
        </authorList>
    </citation>
    <scope>NUCLEOTIDE SEQUENCE [LARGE SCALE GENOMIC DNA]</scope>
    <source>
        <strain>GS115 / ATCC 20864</strain>
    </source>
</reference>
<name>PFKA2_KOMPG</name>
<keyword id="KW-0021">Allosteric enzyme</keyword>
<keyword id="KW-0067">ATP-binding</keyword>
<keyword id="KW-0963">Cytoplasm</keyword>
<keyword id="KW-0324">Glycolysis</keyword>
<keyword id="KW-0418">Kinase</keyword>
<keyword id="KW-0460">Magnesium</keyword>
<keyword id="KW-0479">Metal-binding</keyword>
<keyword id="KW-0547">Nucleotide-binding</keyword>
<keyword id="KW-1185">Reference proteome</keyword>
<keyword id="KW-0808">Transferase</keyword>
<proteinExistence type="inferred from homology"/>
<dbReference type="EC" id="2.7.1.11" evidence="2"/>
<dbReference type="EMBL" id="FN392319">
    <property type="protein sequence ID" value="CAY67878.1"/>
    <property type="status" value="ALT_FRAME"/>
    <property type="molecule type" value="Genomic_DNA"/>
</dbReference>
<dbReference type="RefSeq" id="XP_002490159.1">
    <property type="nucleotide sequence ID" value="XM_002490114.1"/>
</dbReference>
<dbReference type="SMR" id="C4QXA5"/>
<dbReference type="FunCoup" id="C4QXA5">
    <property type="interactions" value="1006"/>
</dbReference>
<dbReference type="STRING" id="644223.C4QXA5"/>
<dbReference type="EnsemblFungi" id="CAY67878">
    <property type="protein sequence ID" value="CAY67878"/>
    <property type="gene ID" value="PAS_chr1-4_0047"/>
</dbReference>
<dbReference type="GeneID" id="8196884"/>
<dbReference type="KEGG" id="ppa:PAS_chr1-4_0047"/>
<dbReference type="eggNOG" id="KOG2440">
    <property type="taxonomic scope" value="Eukaryota"/>
</dbReference>
<dbReference type="HOGENOM" id="CLU_011053_0_0_1"/>
<dbReference type="InParanoid" id="C4QXA5"/>
<dbReference type="OrthoDB" id="537915at2759"/>
<dbReference type="UniPathway" id="UPA00109">
    <property type="reaction ID" value="UER00182"/>
</dbReference>
<dbReference type="Proteomes" id="UP000000314">
    <property type="component" value="Chromosome 1"/>
</dbReference>
<dbReference type="GO" id="GO:0005945">
    <property type="term" value="C:6-phosphofructokinase complex"/>
    <property type="evidence" value="ECO:0007669"/>
    <property type="project" value="TreeGrafter"/>
</dbReference>
<dbReference type="GO" id="GO:0005739">
    <property type="term" value="C:mitochondrion"/>
    <property type="evidence" value="ECO:0007669"/>
    <property type="project" value="TreeGrafter"/>
</dbReference>
<dbReference type="GO" id="GO:0003872">
    <property type="term" value="F:6-phosphofructokinase activity"/>
    <property type="evidence" value="ECO:0007669"/>
    <property type="project" value="UniProtKB-UniRule"/>
</dbReference>
<dbReference type="GO" id="GO:0016208">
    <property type="term" value="F:AMP binding"/>
    <property type="evidence" value="ECO:0007669"/>
    <property type="project" value="TreeGrafter"/>
</dbReference>
<dbReference type="GO" id="GO:0005524">
    <property type="term" value="F:ATP binding"/>
    <property type="evidence" value="ECO:0007669"/>
    <property type="project" value="UniProtKB-KW"/>
</dbReference>
<dbReference type="GO" id="GO:0070095">
    <property type="term" value="F:fructose-6-phosphate binding"/>
    <property type="evidence" value="ECO:0007669"/>
    <property type="project" value="TreeGrafter"/>
</dbReference>
<dbReference type="GO" id="GO:0042802">
    <property type="term" value="F:identical protein binding"/>
    <property type="evidence" value="ECO:0007669"/>
    <property type="project" value="TreeGrafter"/>
</dbReference>
<dbReference type="GO" id="GO:0046872">
    <property type="term" value="F:metal ion binding"/>
    <property type="evidence" value="ECO:0007669"/>
    <property type="project" value="UniProtKB-KW"/>
</dbReference>
<dbReference type="GO" id="GO:0048029">
    <property type="term" value="F:monosaccharide binding"/>
    <property type="evidence" value="ECO:0007669"/>
    <property type="project" value="TreeGrafter"/>
</dbReference>
<dbReference type="GO" id="GO:0061621">
    <property type="term" value="P:canonical glycolysis"/>
    <property type="evidence" value="ECO:0007669"/>
    <property type="project" value="TreeGrafter"/>
</dbReference>
<dbReference type="GO" id="GO:0030388">
    <property type="term" value="P:fructose 1,6-bisphosphate metabolic process"/>
    <property type="evidence" value="ECO:0007669"/>
    <property type="project" value="TreeGrafter"/>
</dbReference>
<dbReference type="GO" id="GO:0006002">
    <property type="term" value="P:fructose 6-phosphate metabolic process"/>
    <property type="evidence" value="ECO:0007669"/>
    <property type="project" value="InterPro"/>
</dbReference>
<dbReference type="FunFam" id="3.40.50.450:FF:000010">
    <property type="entry name" value="ATP-dependent 6-phosphofructokinase"/>
    <property type="match status" value="1"/>
</dbReference>
<dbReference type="FunFam" id="3.40.50.460:FF:000007">
    <property type="entry name" value="ATP-dependent 6-phosphofructokinase"/>
    <property type="match status" value="1"/>
</dbReference>
<dbReference type="FunFam" id="3.40.50.460:FF:000008">
    <property type="entry name" value="ATP-dependent 6-phosphofructokinase"/>
    <property type="match status" value="1"/>
</dbReference>
<dbReference type="Gene3D" id="3.40.50.450">
    <property type="match status" value="2"/>
</dbReference>
<dbReference type="Gene3D" id="3.10.180.10">
    <property type="entry name" value="2,3-Dihydroxybiphenyl 1,2-Dioxygenase, domain 1"/>
    <property type="match status" value="1"/>
</dbReference>
<dbReference type="Gene3D" id="3.40.50.460">
    <property type="entry name" value="Phosphofructokinase domain"/>
    <property type="match status" value="2"/>
</dbReference>
<dbReference type="HAMAP" id="MF_03184">
    <property type="entry name" value="Phosphofructokinase_I_E"/>
    <property type="match status" value="1"/>
</dbReference>
<dbReference type="InterPro" id="IPR009161">
    <property type="entry name" value="6-Pfructokinase_euk"/>
</dbReference>
<dbReference type="InterPro" id="IPR022953">
    <property type="entry name" value="ATP_PFK"/>
</dbReference>
<dbReference type="InterPro" id="IPR029068">
    <property type="entry name" value="Glyas_Bleomycin-R_OHBP_Dase"/>
</dbReference>
<dbReference type="InterPro" id="IPR015912">
    <property type="entry name" value="Phosphofructokinase_CS"/>
</dbReference>
<dbReference type="InterPro" id="IPR000023">
    <property type="entry name" value="Phosphofructokinase_dom"/>
</dbReference>
<dbReference type="InterPro" id="IPR035966">
    <property type="entry name" value="PKF_sf"/>
</dbReference>
<dbReference type="NCBIfam" id="TIGR02478">
    <property type="entry name" value="6PF1K_euk"/>
    <property type="match status" value="1"/>
</dbReference>
<dbReference type="PANTHER" id="PTHR13697:SF4">
    <property type="entry name" value="ATP-DEPENDENT 6-PHOSPHOFRUCTOKINASE"/>
    <property type="match status" value="1"/>
</dbReference>
<dbReference type="PANTHER" id="PTHR13697">
    <property type="entry name" value="PHOSPHOFRUCTOKINASE"/>
    <property type="match status" value="1"/>
</dbReference>
<dbReference type="Pfam" id="PF00365">
    <property type="entry name" value="PFK"/>
    <property type="match status" value="2"/>
</dbReference>
<dbReference type="PIRSF" id="PIRSF000533">
    <property type="entry name" value="ATP_PFK_euk"/>
    <property type="match status" value="1"/>
</dbReference>
<dbReference type="PRINTS" id="PR00476">
    <property type="entry name" value="PHFRCTKINASE"/>
</dbReference>
<dbReference type="SUPFAM" id="SSF54593">
    <property type="entry name" value="Glyoxalase/Bleomycin resistance protein/Dihydroxybiphenyl dioxygenase"/>
    <property type="match status" value="1"/>
</dbReference>
<dbReference type="SUPFAM" id="SSF53784">
    <property type="entry name" value="Phosphofructokinase"/>
    <property type="match status" value="2"/>
</dbReference>
<dbReference type="PROSITE" id="PS00433">
    <property type="entry name" value="PHOSPHOFRUCTOKINASE"/>
    <property type="match status" value="2"/>
</dbReference>
<protein>
    <recommendedName>
        <fullName evidence="2">ATP-dependent 6-phosphofructokinase subunit beta</fullName>
        <ecNumber evidence="2">2.7.1.11</ecNumber>
    </recommendedName>
    <alternativeName>
        <fullName evidence="2">ATP-dependent 6-phosphofructokinase 2</fullName>
        <shortName evidence="2">ATP-PFK 2</shortName>
        <shortName evidence="2">Phosphofructokinase 2</shortName>
    </alternativeName>
    <alternativeName>
        <fullName evidence="2">Phosphohexokinase 2</fullName>
    </alternativeName>
</protein>